<proteinExistence type="evidence at protein level"/>
<reference key="1">
    <citation type="submission" date="1993-10" db="EMBL/GenBank/DDBJ databases">
        <authorList>
            <person name="Richterich P."/>
            <person name="Lakey N."/>
            <person name="Gryan G."/>
            <person name="Jaehn L."/>
            <person name="Mintz L."/>
            <person name="Robison K."/>
            <person name="Church G.M."/>
        </authorList>
    </citation>
    <scope>NUCLEOTIDE SEQUENCE [GENOMIC DNA]</scope>
    <source>
        <strain>K12 / BHB2600</strain>
    </source>
</reference>
<reference key="2">
    <citation type="journal article" date="1997" name="Science">
        <title>The complete genome sequence of Escherichia coli K-12.</title>
        <authorList>
            <person name="Blattner F.R."/>
            <person name="Plunkett G. III"/>
            <person name="Bloch C.A."/>
            <person name="Perna N.T."/>
            <person name="Burland V."/>
            <person name="Riley M."/>
            <person name="Collado-Vides J."/>
            <person name="Glasner J.D."/>
            <person name="Rode C.K."/>
            <person name="Mayhew G.F."/>
            <person name="Gregor J."/>
            <person name="Davis N.W."/>
            <person name="Kirkpatrick H.A."/>
            <person name="Goeden M.A."/>
            <person name="Rose D.J."/>
            <person name="Mau B."/>
            <person name="Shao Y."/>
        </authorList>
    </citation>
    <scope>NUCLEOTIDE SEQUENCE [LARGE SCALE GENOMIC DNA]</scope>
    <source>
        <strain>K12 / MG1655 / ATCC 47076</strain>
    </source>
</reference>
<reference key="3">
    <citation type="journal article" date="2006" name="Mol. Syst. Biol.">
        <title>Highly accurate genome sequences of Escherichia coli K-12 strains MG1655 and W3110.</title>
        <authorList>
            <person name="Hayashi K."/>
            <person name="Morooka N."/>
            <person name="Yamamoto Y."/>
            <person name="Fujita K."/>
            <person name="Isono K."/>
            <person name="Choi S."/>
            <person name="Ohtsubo E."/>
            <person name="Baba T."/>
            <person name="Wanner B.L."/>
            <person name="Mori H."/>
            <person name="Horiuchi T."/>
        </authorList>
    </citation>
    <scope>NUCLEOTIDE SEQUENCE [LARGE SCALE GENOMIC DNA]</scope>
    <source>
        <strain>K12 / W3110 / ATCC 27325 / DSM 5911</strain>
    </source>
</reference>
<reference key="4">
    <citation type="submission" date="1994-02" db="EMBL/GenBank/DDBJ databases">
        <authorList>
            <person name="Robison K."/>
        </authorList>
    </citation>
    <scope>IDENTIFICATION</scope>
</reference>
<reference key="5">
    <citation type="journal article" date="1995" name="J. Bacteriol.">
        <title>Escherichia coli genes required for cytochrome c maturation.</title>
        <authorList>
            <person name="Thoeny-Meyer L."/>
            <person name="Fischer F."/>
            <person name="Kunzler P."/>
            <person name="Ritz D."/>
            <person name="Hennecke H."/>
        </authorList>
    </citation>
    <scope>CHARACTERIZATION</scope>
    <scope>GENE NAME</scope>
</reference>
<keyword id="KW-0002">3D-structure</keyword>
<keyword id="KW-0997">Cell inner membrane</keyword>
<keyword id="KW-1003">Cell membrane</keyword>
<keyword id="KW-0201">Cytochrome c-type biogenesis</keyword>
<keyword id="KW-0472">Membrane</keyword>
<keyword id="KW-1185">Reference proteome</keyword>
<keyword id="KW-0812">Transmembrane</keyword>
<keyword id="KW-1133">Transmembrane helix</keyword>
<keyword id="KW-0813">Transport</keyword>
<gene>
    <name type="primary">ccmD</name>
    <name type="synonym">yojM</name>
    <name type="ordered locus">b2198</name>
    <name type="ordered locus">JW2186</name>
</gene>
<sequence length="69" mass="7745">MTPAFASWNEFFAMGGYAFFVWLAVVMTVIPLVVLVVHSVMQHRAILRGVAQQRAREARLRAAQQQEAA</sequence>
<evidence type="ECO:0000255" key="1"/>
<evidence type="ECO:0000305" key="2"/>
<evidence type="ECO:0007829" key="3">
    <source>
        <dbReference type="PDB" id="7F04"/>
    </source>
</evidence>
<organism>
    <name type="scientific">Escherichia coli (strain K12)</name>
    <dbReference type="NCBI Taxonomy" id="83333"/>
    <lineage>
        <taxon>Bacteria</taxon>
        <taxon>Pseudomonadati</taxon>
        <taxon>Pseudomonadota</taxon>
        <taxon>Gammaproteobacteria</taxon>
        <taxon>Enterobacterales</taxon>
        <taxon>Enterobacteriaceae</taxon>
        <taxon>Escherichia</taxon>
    </lineage>
</organism>
<accession>P0ABM5</accession>
<accession>P36770</accession>
<accession>Q2MAP5</accession>
<comment type="function">
    <text evidence="2">Required for the export of heme to the periplasm for the biogenesis of c-type cytochromes.</text>
</comment>
<comment type="interaction">
    <interactant intactId="EBI-3894922">
        <id>P0ABM5</id>
    </interactant>
    <interactant intactId="EBI-2123469">
        <id>P0ABM1</id>
        <label>ccmC</label>
    </interactant>
    <organismsDiffer>false</organismsDiffer>
    <experiments>4</experiments>
</comment>
<comment type="subcellular location">
    <subcellularLocation>
        <location evidence="2">Cell inner membrane</location>
        <topology evidence="2">Single-pass membrane protein</topology>
    </subcellularLocation>
</comment>
<comment type="similarity">
    <text evidence="2">Belongs to the CcmD/CycX/HelD family.</text>
</comment>
<feature type="chain" id="PRO_0000201563" description="Heme exporter protein D">
    <location>
        <begin position="1"/>
        <end position="69"/>
    </location>
</feature>
<feature type="transmembrane region" description="Helical" evidence="1">
    <location>
        <begin position="18"/>
        <end position="37"/>
    </location>
</feature>
<feature type="strand" evidence="3">
    <location>
        <begin position="4"/>
        <end position="7"/>
    </location>
</feature>
<feature type="turn" evidence="3">
    <location>
        <begin position="8"/>
        <end position="13"/>
    </location>
</feature>
<feature type="helix" evidence="3">
    <location>
        <begin position="18"/>
        <end position="52"/>
    </location>
</feature>
<dbReference type="EMBL" id="U00008">
    <property type="protein sequence ID" value="AAA16390.1"/>
    <property type="molecule type" value="Genomic_DNA"/>
</dbReference>
<dbReference type="EMBL" id="U00096">
    <property type="protein sequence ID" value="AAC75258.1"/>
    <property type="molecule type" value="Genomic_DNA"/>
</dbReference>
<dbReference type="EMBL" id="AP009048">
    <property type="protein sequence ID" value="BAE76661.1"/>
    <property type="molecule type" value="Genomic_DNA"/>
</dbReference>
<dbReference type="PIR" id="D64989">
    <property type="entry name" value="D64989"/>
</dbReference>
<dbReference type="RefSeq" id="NP_416702.1">
    <property type="nucleotide sequence ID" value="NC_000913.3"/>
</dbReference>
<dbReference type="RefSeq" id="WP_000186540.1">
    <property type="nucleotide sequence ID" value="NZ_STEB01000002.1"/>
</dbReference>
<dbReference type="PDB" id="7F02">
    <property type="method" value="EM"/>
    <property type="resolution" value="3.24 A"/>
    <property type="chains" value="D=1-69"/>
</dbReference>
<dbReference type="PDB" id="7F03">
    <property type="method" value="EM"/>
    <property type="resolution" value="3.29 A"/>
    <property type="chains" value="D=1-69"/>
</dbReference>
<dbReference type="PDB" id="7F04">
    <property type="method" value="EM"/>
    <property type="resolution" value="2.86 A"/>
    <property type="chains" value="D=1-69"/>
</dbReference>
<dbReference type="PDB" id="7VFJ">
    <property type="method" value="EM"/>
    <property type="resolution" value="3.98 A"/>
    <property type="chains" value="D=1-69"/>
</dbReference>
<dbReference type="PDB" id="7VFP">
    <property type="method" value="EM"/>
    <property type="resolution" value="4.03 A"/>
    <property type="chains" value="D=1-69"/>
</dbReference>
<dbReference type="PDB" id="8CE1">
    <property type="method" value="EM"/>
    <property type="resolution" value="3.47 A"/>
    <property type="chains" value="D/d=1-69"/>
</dbReference>
<dbReference type="PDB" id="8CE5">
    <property type="method" value="EM"/>
    <property type="resolution" value="3.62 A"/>
    <property type="chains" value="D=1-69"/>
</dbReference>
<dbReference type="PDB" id="8CE8">
    <property type="method" value="EM"/>
    <property type="resolution" value="3.81 A"/>
    <property type="chains" value="D/d=1-69"/>
</dbReference>
<dbReference type="PDB" id="8CEA">
    <property type="method" value="EM"/>
    <property type="resolution" value="3.94 A"/>
    <property type="chains" value="D=1-69"/>
</dbReference>
<dbReference type="PDBsum" id="7F02"/>
<dbReference type="PDBsum" id="7F03"/>
<dbReference type="PDBsum" id="7F04"/>
<dbReference type="PDBsum" id="7VFJ"/>
<dbReference type="PDBsum" id="7VFP"/>
<dbReference type="PDBsum" id="8CE1"/>
<dbReference type="PDBsum" id="8CE5"/>
<dbReference type="PDBsum" id="8CE8"/>
<dbReference type="PDBsum" id="8CEA"/>
<dbReference type="EMDB" id="EMD-16597"/>
<dbReference type="EMDB" id="EMD-16599"/>
<dbReference type="EMDB" id="EMD-16601"/>
<dbReference type="EMDB" id="EMD-16602"/>
<dbReference type="EMDB" id="EMD-31394"/>
<dbReference type="EMDB" id="EMD-31395"/>
<dbReference type="EMDB" id="EMD-31396"/>
<dbReference type="EMDB" id="EMD-31956"/>
<dbReference type="EMDB" id="EMD-31957"/>
<dbReference type="SMR" id="P0ABM5"/>
<dbReference type="BioGRID" id="4260484">
    <property type="interactions" value="9"/>
</dbReference>
<dbReference type="ComplexPortal" id="CPX-3568">
    <property type="entry name" value="CcmABCDE system I cytochrome c biogenesis complex"/>
</dbReference>
<dbReference type="FunCoup" id="P0ABM5">
    <property type="interactions" value="297"/>
</dbReference>
<dbReference type="IntAct" id="P0ABM5">
    <property type="interactions" value="2"/>
</dbReference>
<dbReference type="STRING" id="511145.b2198"/>
<dbReference type="PaxDb" id="511145-b2198"/>
<dbReference type="EnsemblBacteria" id="AAC75258">
    <property type="protein sequence ID" value="AAC75258"/>
    <property type="gene ID" value="b2198"/>
</dbReference>
<dbReference type="GeneID" id="93774980"/>
<dbReference type="GeneID" id="946709"/>
<dbReference type="KEGG" id="ecj:JW2186"/>
<dbReference type="KEGG" id="eco:b2198"/>
<dbReference type="KEGG" id="ecoc:C3026_12285"/>
<dbReference type="PATRIC" id="fig|511145.12.peg.2287"/>
<dbReference type="EchoBASE" id="EB2088"/>
<dbReference type="eggNOG" id="COG3114">
    <property type="taxonomic scope" value="Bacteria"/>
</dbReference>
<dbReference type="HOGENOM" id="CLU_180892_0_0_6"/>
<dbReference type="InParanoid" id="P0ABM5"/>
<dbReference type="OMA" id="MFFQSWS"/>
<dbReference type="PhylomeDB" id="P0ABM5"/>
<dbReference type="BioCyc" id="EcoCyc:EG12169-MONOMER"/>
<dbReference type="BioCyc" id="MetaCyc:EG12169-MONOMER"/>
<dbReference type="PRO" id="PR:P0ABM5"/>
<dbReference type="Proteomes" id="UP000000625">
    <property type="component" value="Chromosome"/>
</dbReference>
<dbReference type="GO" id="GO:0043190">
    <property type="term" value="C:ATP-binding cassette (ABC) transporter complex"/>
    <property type="evidence" value="ECO:0000303"/>
    <property type="project" value="ComplexPortal"/>
</dbReference>
<dbReference type="GO" id="GO:0005886">
    <property type="term" value="C:plasma membrane"/>
    <property type="evidence" value="ECO:0000255"/>
    <property type="project" value="EcoCyc"/>
</dbReference>
<dbReference type="GO" id="GO:1903607">
    <property type="term" value="P:cytochrome c biosynthetic process"/>
    <property type="evidence" value="ECO:0000314"/>
    <property type="project" value="EcoCyc"/>
</dbReference>
<dbReference type="GO" id="GO:0017004">
    <property type="term" value="P:cytochrome complex assembly"/>
    <property type="evidence" value="ECO:0000303"/>
    <property type="project" value="ComplexPortal"/>
</dbReference>
<dbReference type="GO" id="GO:1904334">
    <property type="term" value="P:heme import across plasma membrane"/>
    <property type="evidence" value="ECO:0000303"/>
    <property type="project" value="ComplexPortal"/>
</dbReference>
<dbReference type="InterPro" id="IPR007078">
    <property type="entry name" value="Haem_export_protD_CcmD"/>
</dbReference>
<dbReference type="InterPro" id="IPR052075">
    <property type="entry name" value="Heme_exporter_D"/>
</dbReference>
<dbReference type="NCBIfam" id="TIGR03141">
    <property type="entry name" value="cytochro_ccmD"/>
    <property type="match status" value="1"/>
</dbReference>
<dbReference type="PANTHER" id="PTHR37531">
    <property type="entry name" value="HEME EXPORTER PROTEIN D"/>
    <property type="match status" value="1"/>
</dbReference>
<dbReference type="PANTHER" id="PTHR37531:SF1">
    <property type="entry name" value="HEME EXPORTER PROTEIN D"/>
    <property type="match status" value="1"/>
</dbReference>
<dbReference type="Pfam" id="PF04995">
    <property type="entry name" value="CcmD"/>
    <property type="match status" value="1"/>
</dbReference>
<name>CCMD_ECOLI</name>
<protein>
    <recommendedName>
        <fullName>Heme exporter protein D</fullName>
    </recommendedName>
    <alternativeName>
        <fullName>Cytochrome c-type biogenesis protein CcmD</fullName>
    </alternativeName>
</protein>